<dbReference type="EMBL" id="AF309034">
    <property type="protein sequence ID" value="AAK26115.1"/>
    <property type="molecule type" value="mRNA"/>
</dbReference>
<dbReference type="EMBL" id="AF309476">
    <property type="protein sequence ID" value="AAK26243.1"/>
    <property type="molecule type" value="Genomic_DNA"/>
</dbReference>
<dbReference type="EMBL" id="AF309471">
    <property type="protein sequence ID" value="AAK26243.1"/>
    <property type="status" value="JOINED"/>
    <property type="molecule type" value="Genomic_DNA"/>
</dbReference>
<dbReference type="EMBL" id="AF309472">
    <property type="protein sequence ID" value="AAK26243.1"/>
    <property type="status" value="JOINED"/>
    <property type="molecule type" value="Genomic_DNA"/>
</dbReference>
<dbReference type="EMBL" id="AF309473">
    <property type="protein sequence ID" value="AAK26243.1"/>
    <property type="status" value="JOINED"/>
    <property type="molecule type" value="Genomic_DNA"/>
</dbReference>
<dbReference type="EMBL" id="AF309474">
    <property type="protein sequence ID" value="AAK26243.1"/>
    <property type="status" value="JOINED"/>
    <property type="molecule type" value="Genomic_DNA"/>
</dbReference>
<dbReference type="EMBL" id="AF309475">
    <property type="protein sequence ID" value="AAK26243.1"/>
    <property type="status" value="JOINED"/>
    <property type="molecule type" value="Genomic_DNA"/>
</dbReference>
<dbReference type="EMBL" id="AF309476">
    <property type="protein sequence ID" value="AAK26244.1"/>
    <property type="molecule type" value="Genomic_DNA"/>
</dbReference>
<dbReference type="EMBL" id="AF309471">
    <property type="protein sequence ID" value="AAK26244.1"/>
    <property type="status" value="JOINED"/>
    <property type="molecule type" value="Genomic_DNA"/>
</dbReference>
<dbReference type="EMBL" id="AF309472">
    <property type="protein sequence ID" value="AAK26244.1"/>
    <property type="status" value="JOINED"/>
    <property type="molecule type" value="Genomic_DNA"/>
</dbReference>
<dbReference type="EMBL" id="AF309473">
    <property type="protein sequence ID" value="AAK26244.1"/>
    <property type="status" value="JOINED"/>
    <property type="molecule type" value="Genomic_DNA"/>
</dbReference>
<dbReference type="EMBL" id="AF309474">
    <property type="protein sequence ID" value="AAK26244.1"/>
    <property type="status" value="JOINED"/>
    <property type="molecule type" value="Genomic_DNA"/>
</dbReference>
<dbReference type="EMBL" id="AF309475">
    <property type="protein sequence ID" value="AAK26244.1"/>
    <property type="status" value="JOINED"/>
    <property type="molecule type" value="Genomic_DNA"/>
</dbReference>
<dbReference type="EMBL" id="AL136780">
    <property type="protein sequence ID" value="CAB66714.1"/>
    <property type="molecule type" value="mRNA"/>
</dbReference>
<dbReference type="EMBL" id="AC009869">
    <property type="status" value="NOT_ANNOTATED_CDS"/>
    <property type="molecule type" value="Genomic_DNA"/>
</dbReference>
<dbReference type="EMBL" id="AC013595">
    <property type="status" value="NOT_ANNOTATED_CDS"/>
    <property type="molecule type" value="Genomic_DNA"/>
</dbReference>
<dbReference type="EMBL" id="AC027016">
    <property type="status" value="NOT_ANNOTATED_CDS"/>
    <property type="molecule type" value="Genomic_DNA"/>
</dbReference>
<dbReference type="EMBL" id="AC068405">
    <property type="status" value="NOT_ANNOTATED_CDS"/>
    <property type="molecule type" value="Genomic_DNA"/>
</dbReference>
<dbReference type="EMBL" id="AC103794">
    <property type="status" value="NOT_ANNOTATED_CDS"/>
    <property type="molecule type" value="Genomic_DNA"/>
</dbReference>
<dbReference type="EMBL" id="CH471064">
    <property type="protein sequence ID" value="EAW68458.1"/>
    <property type="molecule type" value="Genomic_DNA"/>
</dbReference>
<dbReference type="EMBL" id="BC037866">
    <property type="status" value="NOT_ANNOTATED_CDS"/>
    <property type="molecule type" value="mRNA"/>
</dbReference>
<dbReference type="EMBL" id="BC047064">
    <property type="protein sequence ID" value="AAH47064.2"/>
    <property type="molecule type" value="mRNA"/>
</dbReference>
<dbReference type="EMBL" id="X65663">
    <property type="protein sequence ID" value="CAA46614.1"/>
    <property type="molecule type" value="mRNA"/>
</dbReference>
<dbReference type="CCDS" id="CCDS53604.1">
    <molecule id="P35712-4"/>
</dbReference>
<dbReference type="CCDS" id="CCDS7821.1">
    <molecule id="P35712-3"/>
</dbReference>
<dbReference type="CCDS" id="CCDS91447.1">
    <molecule id="P35712-1"/>
</dbReference>
<dbReference type="RefSeq" id="NP_001139283.1">
    <molecule id="P35712-4"/>
    <property type="nucleotide sequence ID" value="NM_001145811.2"/>
</dbReference>
<dbReference type="RefSeq" id="NP_001139291.2">
    <molecule id="P35712-1"/>
    <property type="nucleotide sequence ID" value="NM_001145819.2"/>
</dbReference>
<dbReference type="RefSeq" id="NP_001354802.1">
    <molecule id="P35712-1"/>
    <property type="nucleotide sequence ID" value="NM_001367873.1"/>
</dbReference>
<dbReference type="RefSeq" id="NP_059978.2">
    <molecule id="P35712-4"/>
    <property type="nucleotide sequence ID" value="NM_017508.3"/>
</dbReference>
<dbReference type="RefSeq" id="NP_201583.2">
    <molecule id="P35712-3"/>
    <property type="nucleotide sequence ID" value="NM_033326.3"/>
</dbReference>
<dbReference type="SMR" id="P35712"/>
<dbReference type="BioGRID" id="120714">
    <property type="interactions" value="150"/>
</dbReference>
<dbReference type="ELM" id="P35712"/>
<dbReference type="FunCoup" id="P35712">
    <property type="interactions" value="3106"/>
</dbReference>
<dbReference type="IntAct" id="P35712">
    <property type="interactions" value="142"/>
</dbReference>
<dbReference type="MINT" id="P35712"/>
<dbReference type="STRING" id="9606.ENSP00000379644"/>
<dbReference type="GlyGen" id="P35712">
    <property type="glycosylation" value="2 sites, 1 O-linked glycan (2 sites)"/>
</dbReference>
<dbReference type="iPTMnet" id="P35712"/>
<dbReference type="PhosphoSitePlus" id="P35712"/>
<dbReference type="BioMuta" id="SOX6"/>
<dbReference type="DMDM" id="215274178"/>
<dbReference type="jPOST" id="P35712"/>
<dbReference type="MassIVE" id="P35712"/>
<dbReference type="PaxDb" id="9606-ENSP00000379644"/>
<dbReference type="PeptideAtlas" id="P35712"/>
<dbReference type="ProteomicsDB" id="55141">
    <molecule id="P35712-1"/>
</dbReference>
<dbReference type="ProteomicsDB" id="55142">
    <molecule id="P35712-2"/>
</dbReference>
<dbReference type="ProteomicsDB" id="55143">
    <molecule id="P35712-3"/>
</dbReference>
<dbReference type="ProteomicsDB" id="55144">
    <molecule id="P35712-4"/>
</dbReference>
<dbReference type="Pumba" id="P35712"/>
<dbReference type="Antibodypedia" id="1097">
    <property type="antibodies" value="290 antibodies from 33 providers"/>
</dbReference>
<dbReference type="DNASU" id="55553"/>
<dbReference type="Ensembl" id="ENST00000316399.10">
    <molecule id="P35712-3"/>
    <property type="protein sequence ID" value="ENSP00000324948.6"/>
    <property type="gene ID" value="ENSG00000110693.19"/>
</dbReference>
<dbReference type="Ensembl" id="ENST00000396356.7">
    <molecule id="P35712-3"/>
    <property type="protein sequence ID" value="ENSP00000379644.3"/>
    <property type="gene ID" value="ENSG00000110693.19"/>
</dbReference>
<dbReference type="Ensembl" id="ENST00000527619.6">
    <molecule id="P35712-4"/>
    <property type="protein sequence ID" value="ENSP00000434455.2"/>
    <property type="gene ID" value="ENSG00000110693.19"/>
</dbReference>
<dbReference type="Ensembl" id="ENST00000528252.5">
    <molecule id="P35712-4"/>
    <property type="protein sequence ID" value="ENSP00000432134.1"/>
    <property type="gene ID" value="ENSG00000110693.19"/>
</dbReference>
<dbReference type="Ensembl" id="ENST00000528429.5">
    <molecule id="P35712-1"/>
    <property type="protein sequence ID" value="ENSP00000433233.1"/>
    <property type="gene ID" value="ENSG00000110693.19"/>
</dbReference>
<dbReference type="Ensembl" id="ENST00000655819.1">
    <molecule id="P35712-2"/>
    <property type="protein sequence ID" value="ENSP00000499737.1"/>
    <property type="gene ID" value="ENSG00000110693.19"/>
</dbReference>
<dbReference type="Ensembl" id="ENST00000683767.1">
    <molecule id="P35712-1"/>
    <property type="protein sequence ID" value="ENSP00000507545.1"/>
    <property type="gene ID" value="ENSG00000110693.19"/>
</dbReference>
<dbReference type="GeneID" id="55553"/>
<dbReference type="KEGG" id="hsa:55553"/>
<dbReference type="MANE-Select" id="ENST00000683767.1">
    <property type="protein sequence ID" value="ENSP00000507545.1"/>
    <property type="RefSeq nucleotide sequence ID" value="NM_001367873.1"/>
    <property type="RefSeq protein sequence ID" value="NP_001354802.1"/>
</dbReference>
<dbReference type="UCSC" id="uc001mmd.4">
    <molecule id="P35712-1"/>
    <property type="organism name" value="human"/>
</dbReference>
<dbReference type="AGR" id="HGNC:16421"/>
<dbReference type="CTD" id="55553"/>
<dbReference type="DisGeNET" id="55553"/>
<dbReference type="GeneCards" id="SOX6"/>
<dbReference type="HGNC" id="HGNC:16421">
    <property type="gene designation" value="SOX6"/>
</dbReference>
<dbReference type="HPA" id="ENSG00000110693">
    <property type="expression patterns" value="Tissue enhanced (bone)"/>
</dbReference>
<dbReference type="MalaCards" id="SOX6"/>
<dbReference type="MIM" id="607257">
    <property type="type" value="gene"/>
</dbReference>
<dbReference type="MIM" id="618971">
    <property type="type" value="phenotype"/>
</dbReference>
<dbReference type="neXtProt" id="NX_P35712"/>
<dbReference type="OpenTargets" id="ENSG00000110693"/>
<dbReference type="PharmGKB" id="PA38137"/>
<dbReference type="VEuPathDB" id="HostDB:ENSG00000110693"/>
<dbReference type="eggNOG" id="KOG0528">
    <property type="taxonomic scope" value="Eukaryota"/>
</dbReference>
<dbReference type="GeneTree" id="ENSGT00940000156433"/>
<dbReference type="HOGENOM" id="CLU_018522_0_1_1"/>
<dbReference type="InParanoid" id="P35712"/>
<dbReference type="OMA" id="XESENNK"/>
<dbReference type="OrthoDB" id="6247875at2759"/>
<dbReference type="PAN-GO" id="P35712">
    <property type="GO annotations" value="7 GO annotations based on evolutionary models"/>
</dbReference>
<dbReference type="PhylomeDB" id="P35712"/>
<dbReference type="TreeFam" id="TF320471"/>
<dbReference type="PathwayCommons" id="P35712"/>
<dbReference type="Reactome" id="R-HSA-3769402">
    <property type="pathway name" value="Deactivation of the beta-catenin transactivating complex"/>
</dbReference>
<dbReference type="SignaLink" id="P35712"/>
<dbReference type="SIGNOR" id="P35712"/>
<dbReference type="BioGRID-ORCS" id="55553">
    <property type="hits" value="19 hits in 1178 CRISPR screens"/>
</dbReference>
<dbReference type="ChiTaRS" id="SOX6">
    <property type="organism name" value="human"/>
</dbReference>
<dbReference type="GeneWiki" id="SOX6"/>
<dbReference type="GenomeRNAi" id="55553"/>
<dbReference type="Pharos" id="P35712">
    <property type="development level" value="Tbio"/>
</dbReference>
<dbReference type="PRO" id="PR:P35712"/>
<dbReference type="Proteomes" id="UP000005640">
    <property type="component" value="Chromosome 11"/>
</dbReference>
<dbReference type="RNAct" id="P35712">
    <property type="molecule type" value="protein"/>
</dbReference>
<dbReference type="Bgee" id="ENSG00000110693">
    <property type="expression patterns" value="Expressed in epithelial cell of pancreas and 168 other cell types or tissues"/>
</dbReference>
<dbReference type="ExpressionAtlas" id="P35712">
    <property type="expression patterns" value="baseline and differential"/>
</dbReference>
<dbReference type="GO" id="GO:0000785">
    <property type="term" value="C:chromatin"/>
    <property type="evidence" value="ECO:0000247"/>
    <property type="project" value="NTNU_SB"/>
</dbReference>
<dbReference type="GO" id="GO:0005737">
    <property type="term" value="C:cytoplasm"/>
    <property type="evidence" value="ECO:0007669"/>
    <property type="project" value="UniProtKB-SubCell"/>
</dbReference>
<dbReference type="GO" id="GO:0005654">
    <property type="term" value="C:nucleoplasm"/>
    <property type="evidence" value="ECO:0000314"/>
    <property type="project" value="HPA"/>
</dbReference>
<dbReference type="GO" id="GO:0005634">
    <property type="term" value="C:nucleus"/>
    <property type="evidence" value="ECO:0000314"/>
    <property type="project" value="LIFEdb"/>
</dbReference>
<dbReference type="GO" id="GO:0003677">
    <property type="term" value="F:DNA binding"/>
    <property type="evidence" value="ECO:0000303"/>
    <property type="project" value="UniProtKB"/>
</dbReference>
<dbReference type="GO" id="GO:0003700">
    <property type="term" value="F:DNA-binding transcription factor activity"/>
    <property type="evidence" value="ECO:0000315"/>
    <property type="project" value="UniProtKB"/>
</dbReference>
<dbReference type="GO" id="GO:0000981">
    <property type="term" value="F:DNA-binding transcription factor activity, RNA polymerase II-specific"/>
    <property type="evidence" value="ECO:0000247"/>
    <property type="project" value="NTNU_SB"/>
</dbReference>
<dbReference type="GO" id="GO:0001217">
    <property type="term" value="F:DNA-binding transcription repressor activity"/>
    <property type="evidence" value="ECO:0000250"/>
    <property type="project" value="UniProtKB"/>
</dbReference>
<dbReference type="GO" id="GO:0042803">
    <property type="term" value="F:protein homodimerization activity"/>
    <property type="evidence" value="ECO:0000315"/>
    <property type="project" value="UniProtKB"/>
</dbReference>
<dbReference type="GO" id="GO:0000978">
    <property type="term" value="F:RNA polymerase II cis-regulatory region sequence-specific DNA binding"/>
    <property type="evidence" value="ECO:0000318"/>
    <property type="project" value="GO_Central"/>
</dbReference>
<dbReference type="GO" id="GO:0000976">
    <property type="term" value="F:transcription cis-regulatory region binding"/>
    <property type="evidence" value="ECO:0000314"/>
    <property type="project" value="UniProtKB"/>
</dbReference>
<dbReference type="GO" id="GO:0007420">
    <property type="term" value="P:brain development"/>
    <property type="evidence" value="ECO:0000314"/>
    <property type="project" value="UniProtKB"/>
</dbReference>
<dbReference type="GO" id="GO:0001502">
    <property type="term" value="P:cartilage condensation"/>
    <property type="evidence" value="ECO:0000250"/>
    <property type="project" value="UniProtKB"/>
</dbReference>
<dbReference type="GO" id="GO:0051216">
    <property type="term" value="P:cartilage development"/>
    <property type="evidence" value="ECO:0000250"/>
    <property type="project" value="UniProtKB"/>
</dbReference>
<dbReference type="GO" id="GO:0045165">
    <property type="term" value="P:cell fate commitment"/>
    <property type="evidence" value="ECO:0000318"/>
    <property type="project" value="GO_Central"/>
</dbReference>
<dbReference type="GO" id="GO:0071560">
    <property type="term" value="P:cellular response to transforming growth factor beta stimulus"/>
    <property type="evidence" value="ECO:0000314"/>
    <property type="project" value="UniProtKB"/>
</dbReference>
<dbReference type="GO" id="GO:0007417">
    <property type="term" value="P:central nervous system development"/>
    <property type="evidence" value="ECO:0000318"/>
    <property type="project" value="GO_Central"/>
</dbReference>
<dbReference type="GO" id="GO:0002062">
    <property type="term" value="P:chondrocyte differentiation"/>
    <property type="evidence" value="ECO:0000250"/>
    <property type="project" value="UniProtKB"/>
</dbReference>
<dbReference type="GO" id="GO:0007517">
    <property type="term" value="P:muscle organ development"/>
    <property type="evidence" value="ECO:0000303"/>
    <property type="project" value="UniProtKB"/>
</dbReference>
<dbReference type="GO" id="GO:2000726">
    <property type="term" value="P:negative regulation of cardiac muscle cell differentiation"/>
    <property type="evidence" value="ECO:0000315"/>
    <property type="project" value="BHF-UCL"/>
</dbReference>
<dbReference type="GO" id="GO:0061036">
    <property type="term" value="P:positive regulation of cartilage development"/>
    <property type="evidence" value="ECO:0000314"/>
    <property type="project" value="UniProtKB"/>
</dbReference>
<dbReference type="GO" id="GO:0032332">
    <property type="term" value="P:positive regulation of chondrocyte differentiation"/>
    <property type="evidence" value="ECO:0000314"/>
    <property type="project" value="UniProtKB"/>
</dbReference>
<dbReference type="GO" id="GO:2000741">
    <property type="term" value="P:positive regulation of mesenchymal stem cell differentiation"/>
    <property type="evidence" value="ECO:0000314"/>
    <property type="project" value="UniProtKB"/>
</dbReference>
<dbReference type="GO" id="GO:0006355">
    <property type="term" value="P:regulation of DNA-templated transcription"/>
    <property type="evidence" value="ECO:0000303"/>
    <property type="project" value="UniProtKB"/>
</dbReference>
<dbReference type="GO" id="GO:0006357">
    <property type="term" value="P:regulation of transcription by RNA polymerase II"/>
    <property type="evidence" value="ECO:0000318"/>
    <property type="project" value="GO_Central"/>
</dbReference>
<dbReference type="GO" id="GO:0021529">
    <property type="term" value="P:spinal cord oligodendrocyte cell differentiation"/>
    <property type="evidence" value="ECO:0000250"/>
    <property type="project" value="UniProtKB"/>
</dbReference>
<dbReference type="CDD" id="cd22042">
    <property type="entry name" value="HMG-box_EGL13-like"/>
    <property type="match status" value="1"/>
</dbReference>
<dbReference type="FunFam" id="1.10.30.10:FF:000003">
    <property type="entry name" value="Putative transcription factor SOX-6"/>
    <property type="match status" value="1"/>
</dbReference>
<dbReference type="Gene3D" id="1.10.30.10">
    <property type="entry name" value="High mobility group box domain"/>
    <property type="match status" value="1"/>
</dbReference>
<dbReference type="InterPro" id="IPR009071">
    <property type="entry name" value="HMG_box_dom"/>
</dbReference>
<dbReference type="InterPro" id="IPR036910">
    <property type="entry name" value="HMG_box_dom_sf"/>
</dbReference>
<dbReference type="InterPro" id="IPR051356">
    <property type="entry name" value="SOX/SOX-like_TF"/>
</dbReference>
<dbReference type="PANTHER" id="PTHR45789">
    <property type="entry name" value="FI18025P1"/>
    <property type="match status" value="1"/>
</dbReference>
<dbReference type="PANTHER" id="PTHR45789:SF1">
    <property type="entry name" value="TRANSCRIPTION FACTOR SOX-6"/>
    <property type="match status" value="1"/>
</dbReference>
<dbReference type="Pfam" id="PF00505">
    <property type="entry name" value="HMG_box"/>
    <property type="match status" value="1"/>
</dbReference>
<dbReference type="SMART" id="SM00398">
    <property type="entry name" value="HMG"/>
    <property type="match status" value="1"/>
</dbReference>
<dbReference type="SUPFAM" id="SSF47095">
    <property type="entry name" value="HMG-box"/>
    <property type="match status" value="1"/>
</dbReference>
<dbReference type="PROSITE" id="PS50118">
    <property type="entry name" value="HMG_BOX_2"/>
    <property type="match status" value="1"/>
</dbReference>
<proteinExistence type="evidence at protein level"/>
<name>SOX6_HUMAN</name>
<protein>
    <recommendedName>
        <fullName evidence="11">Transcription factor SOX-6</fullName>
    </recommendedName>
</protein>
<comment type="function">
    <text evidence="1 12">Transcription factor that plays a key role in several developmental processes, including neurogenesis, chondrocytes differentiation and cartilage formation (Probable). Specifically binds the 5'-AACAAT-3' DNA motif present in enhancers and super-enhancers and promotes expression of genes important for chondrogenesis. Required for overt chondrogenesis when condensed prechondrocytes differentiate into early stage chondrocytes: SOX5 and SOX6 cooperatively bind with SOX9 on active enhancers and super-enhancers associated with cartilage-specific genes, and thereby potentiate SOX9's ability to transactivate. Not involved in precartilaginous condensation, the first step in chondrogenesis, during which skeletal progenitors differentiate into prechondrocytes. Together with SOX5, required to form and maintain a pool of highly proliferating chondroblasts between epiphyses and metaphyses, to form columnar chondroblasts, delay chondrocyte prehypertrophy but promote hypertrophy, and to delay terminal differentiation of chondrocytes on contact with ossification fronts. Binds to the proximal promoter region of the myelin protein MPZ gene, and is thereby involved in the differentiation of oligodendroglia in the developing spinal tube. Binds to the gene promoter of MBP and acts as a transcriptional repressor (By similarity).</text>
</comment>
<comment type="subunit">
    <text evidence="1">Homodimer (By similarity). Interacts with DAZAP2 (By similarity). May interact with CENPK (By similarity).</text>
</comment>
<comment type="interaction">
    <interactant intactId="EBI-3505706">
        <id>P35712</id>
    </interactant>
    <interactant intactId="EBI-3505698">
        <id>O15266</id>
        <label>SHOX</label>
    </interactant>
    <organismsDiffer>false</organismsDiffer>
    <experiments>3</experiments>
</comment>
<comment type="subcellular location">
    <subcellularLocation>
        <location evidence="3 6">Nucleus</location>
    </subcellularLocation>
    <subcellularLocation>
        <location evidence="1">Cytoplasm</location>
    </subcellularLocation>
</comment>
<comment type="alternative products">
    <event type="alternative splicing"/>
    <isoform>
        <id>P35712-1</id>
        <name>1</name>
        <sequence type="displayed"/>
    </isoform>
    <isoform>
        <id>P35712-2</id>
        <name>2</name>
        <sequence type="described" ref="VSP_039693 VSP_039694 VSP_039695"/>
    </isoform>
    <isoform>
        <id>P35712-3</id>
        <name>3</name>
        <sequence type="described" ref="VSP_039696"/>
    </isoform>
    <isoform>
        <id>P35712-4</id>
        <name>4</name>
        <sequence type="described" ref="VSP_039694 VSP_039695"/>
    </isoform>
</comment>
<comment type="tissue specificity">
    <text evidence="5">Expressed in a wide variety of tissues, most abundantly in skeletal musclen.</text>
</comment>
<comment type="developmental stage">
    <text evidence="7">Expressed in many prospective brain structures of fetuses (at protein level). Highly expressed in the developing brain with higher expression in the ganglionic eminence, the amygdaloid complex, and the hippocampus. The expression declines in all brain structures in the final stages of gestation and in the neonatal period, such that it is already as low in infants as in adults.</text>
</comment>
<comment type="PTM">
    <text evidence="6">Sumoylation inhibits the transcriptional activity.</text>
</comment>
<comment type="disease" evidence="7">
    <disease id="DI-05890">
        <name>Tolchin-Le Caignec syndrome</name>
        <acronym>TOLCAS</acronym>
        <description>An autosomal dominant disorder characterized by mildly to moderately impaired intellectual development and behavioral problems, such as autism, attention deficit and hyperactivity disorder, and aggressive episodes. Highly variable, additional features include osteochondroma, craniosynostosis, dysmorphic facies, arachnodactyly, and large head circumference.</description>
        <dbReference type="MIM" id="618971"/>
    </disease>
    <text>The disease is caused by variants affecting the gene represented in this entry.</text>
</comment>
<comment type="sequence caution" evidence="11">
    <conflict type="frameshift">
        <sequence resource="EMBL" id="BC037866"/>
    </conflict>
</comment>
<evidence type="ECO:0000250" key="1">
    <source>
        <dbReference type="UniProtKB" id="P40645"/>
    </source>
</evidence>
<evidence type="ECO:0000255" key="2"/>
<evidence type="ECO:0000255" key="3">
    <source>
        <dbReference type="PROSITE-ProRule" id="PRU00267"/>
    </source>
</evidence>
<evidence type="ECO:0000256" key="4">
    <source>
        <dbReference type="SAM" id="MobiDB-lite"/>
    </source>
</evidence>
<evidence type="ECO:0000269" key="5">
    <source>
    </source>
</evidence>
<evidence type="ECO:0000269" key="6">
    <source>
    </source>
</evidence>
<evidence type="ECO:0000269" key="7">
    <source>
    </source>
</evidence>
<evidence type="ECO:0000303" key="8">
    <source>
    </source>
</evidence>
<evidence type="ECO:0000303" key="9">
    <source>
    </source>
</evidence>
<evidence type="ECO:0000303" key="10">
    <source>
    </source>
</evidence>
<evidence type="ECO:0000305" key="11"/>
<evidence type="ECO:0000305" key="12">
    <source>
    </source>
</evidence>
<evidence type="ECO:0000312" key="13">
    <source>
        <dbReference type="HGNC" id="HGNC:16421"/>
    </source>
</evidence>
<evidence type="ECO:0007744" key="14">
    <source>
    </source>
</evidence>
<sequence>MSSKQATSPFACAADGEDAMTQDLTSREKEEGSDQHVASHLPLHPIMHNKPHSEELPTLVSTIQQDADWDSVLSSQQRMESENNKLCSLYSFRNTSTSPHKPDEGSRDREIMTSVTFGTPERRKGSLADVVDTLKQKKLEEMTRTEQEDSSCMEKLLSKDWKEKMERLNTSELLGEIKGTPESLAEKERQLSTMITQLISLREQLLAAHDEQKKLAASQIEKQRQQMDLARQQQEQIARQQQQLLQQQHKINLLQQQIQVQGHMPPLMIPIFPHDQRTLAAAAAAQQGFLFPPGITYKPGDNYPVQFIPSTMAAAAASGLSPLQLQKGHVSHPQINQRLKGLSDRFGRNLDTFEHGGGHSYNHKQIEQLYAAQLASMQVSPGAKMPSTPQPPNTAGTVSPTGIKNEKRGTSPVTQVKDEAAAQPLNLSSRPKTAEPVKSPTSPTQNLFPASKTSPVNLPNKSSIPSPIGGSLGRGSSLDILSSLNSPALFGDQDTVMKAIQEARKMREQIQREQQQQQPHGVDGKLSSINNMGLNSCRNEKERTRFENLGPQLTGKSNEDGKLGPGVIDLTRPEDAEGSKAMNGSAAKLQQYYCWPTGGATVAEARVYRDARGRASSEPHIKRPMNAFMVWAKDERRKILQAFPDMHNSNISKILGSRWKSMSNQEKQPYYEEQARLSKIHLEKYPNYKYKPRPKRTCIVDGKKLRIGEYKQLMRSRRQEMRQFFTVGQQPQIPITTGTGVVYPGAITMATTTPSPQMTSDCSSTSASPEPSLPVIQSTYGMKTDGGSLAGNEMINGEDEMEMYDDYEDDPKSDYSSENEAPEAVSAN</sequence>
<reference key="1">
    <citation type="journal article" date="2001" name="Gene">
        <title>Cloning, characterization and chromosome mapping of the human SOX6 gene.</title>
        <authorList>
            <person name="Cohen-Barak O."/>
            <person name="Hagiwara N."/>
            <person name="Arlt M.F."/>
            <person name="Horton J.P."/>
            <person name="Brilliant M.H."/>
        </authorList>
    </citation>
    <scope>NUCLEOTIDE SEQUENCE [GENOMIC DNA / MRNA] (ISOFORM 3)</scope>
    <scope>ALTERNATIVE SPLICING</scope>
    <scope>TISSUE SPECIFICITY</scope>
    <source>
        <tissue>Lymphocyte</tissue>
        <tissue>Myoblast</tissue>
    </source>
</reference>
<reference key="2">
    <citation type="journal article" date="2001" name="Genome Res.">
        <title>Towards a catalog of human genes and proteins: sequencing and analysis of 500 novel complete protein coding human cDNAs.</title>
        <authorList>
            <person name="Wiemann S."/>
            <person name="Weil B."/>
            <person name="Wellenreuther R."/>
            <person name="Gassenhuber J."/>
            <person name="Glassl S."/>
            <person name="Ansorge W."/>
            <person name="Boecher M."/>
            <person name="Bloecker H."/>
            <person name="Bauersachs S."/>
            <person name="Blum H."/>
            <person name="Lauber J."/>
            <person name="Duesterhoeft A."/>
            <person name="Beyer A."/>
            <person name="Koehrer K."/>
            <person name="Strack N."/>
            <person name="Mewes H.-W."/>
            <person name="Ottenwaelder B."/>
            <person name="Obermaier B."/>
            <person name="Tampe J."/>
            <person name="Heubner D."/>
            <person name="Wambutt R."/>
            <person name="Korn B."/>
            <person name="Klein M."/>
            <person name="Poustka A."/>
        </authorList>
    </citation>
    <scope>NUCLEOTIDE SEQUENCE [LARGE SCALE MRNA] (ISOFORM 2)</scope>
    <source>
        <tissue>Testis</tissue>
    </source>
</reference>
<reference key="3">
    <citation type="journal article" date="2006" name="Nature">
        <title>Human chromosome 11 DNA sequence and analysis including novel gene identification.</title>
        <authorList>
            <person name="Taylor T.D."/>
            <person name="Noguchi H."/>
            <person name="Totoki Y."/>
            <person name="Toyoda A."/>
            <person name="Kuroki Y."/>
            <person name="Dewar K."/>
            <person name="Lloyd C."/>
            <person name="Itoh T."/>
            <person name="Takeda T."/>
            <person name="Kim D.-W."/>
            <person name="She X."/>
            <person name="Barlow K.F."/>
            <person name="Bloom T."/>
            <person name="Bruford E."/>
            <person name="Chang J.L."/>
            <person name="Cuomo C.A."/>
            <person name="Eichler E."/>
            <person name="FitzGerald M.G."/>
            <person name="Jaffe D.B."/>
            <person name="LaButti K."/>
            <person name="Nicol R."/>
            <person name="Park H.-S."/>
            <person name="Seaman C."/>
            <person name="Sougnez C."/>
            <person name="Yang X."/>
            <person name="Zimmer A.R."/>
            <person name="Zody M.C."/>
            <person name="Birren B.W."/>
            <person name="Nusbaum C."/>
            <person name="Fujiyama A."/>
            <person name="Hattori M."/>
            <person name="Rogers J."/>
            <person name="Lander E.S."/>
            <person name="Sakaki Y."/>
        </authorList>
    </citation>
    <scope>NUCLEOTIDE SEQUENCE [LARGE SCALE GENOMIC DNA]</scope>
</reference>
<reference key="4">
    <citation type="submission" date="2005-09" db="EMBL/GenBank/DDBJ databases">
        <authorList>
            <person name="Mural R.J."/>
            <person name="Istrail S."/>
            <person name="Sutton G.G."/>
            <person name="Florea L."/>
            <person name="Halpern A.L."/>
            <person name="Mobarry C.M."/>
            <person name="Lippert R."/>
            <person name="Walenz B."/>
            <person name="Shatkay H."/>
            <person name="Dew I."/>
            <person name="Miller J.R."/>
            <person name="Flanigan M.J."/>
            <person name="Edwards N.J."/>
            <person name="Bolanos R."/>
            <person name="Fasulo D."/>
            <person name="Halldorsson B.V."/>
            <person name="Hannenhalli S."/>
            <person name="Turner R."/>
            <person name="Yooseph S."/>
            <person name="Lu F."/>
            <person name="Nusskern D.R."/>
            <person name="Shue B.C."/>
            <person name="Zheng X.H."/>
            <person name="Zhong F."/>
            <person name="Delcher A.L."/>
            <person name="Huson D.H."/>
            <person name="Kravitz S.A."/>
            <person name="Mouchard L."/>
            <person name="Reinert K."/>
            <person name="Remington K.A."/>
            <person name="Clark A.G."/>
            <person name="Waterman M.S."/>
            <person name="Eichler E.E."/>
            <person name="Adams M.D."/>
            <person name="Hunkapiller M.W."/>
            <person name="Myers E.W."/>
            <person name="Venter J.C."/>
        </authorList>
    </citation>
    <scope>NUCLEOTIDE SEQUENCE [LARGE SCALE GENOMIC DNA]</scope>
</reference>
<reference key="5">
    <citation type="journal article" date="2004" name="Genome Res.">
        <title>The status, quality, and expansion of the NIH full-length cDNA project: the Mammalian Gene Collection (MGC).</title>
        <authorList>
            <consortium name="The MGC Project Team"/>
        </authorList>
    </citation>
    <scope>NUCLEOTIDE SEQUENCE [LARGE SCALE MRNA] (ISOFORMS 1 AND 4)</scope>
    <source>
        <tissue>Testis</tissue>
    </source>
</reference>
<reference key="6">
    <citation type="journal article" date="1992" name="Nucleic Acids Res.">
        <title>A conserved family of genes related to the testis determining gene, SRY.</title>
        <authorList>
            <person name="Denny P."/>
            <person name="Swift S."/>
            <person name="Brand N."/>
            <person name="Dabhade N."/>
            <person name="Barton P."/>
            <person name="Ashworth A."/>
        </authorList>
    </citation>
    <scope>NUCLEOTIDE SEQUENCE [MRNA] OF 632-685 (ISOFORMS 1/2/3)</scope>
</reference>
<reference key="7">
    <citation type="journal article" date="2006" name="FEBS Lett.">
        <title>Repression of SOX6 transcriptional activity by SUMO modification.</title>
        <authorList>
            <person name="Fernandez-Lloris R."/>
            <person name="Osses N."/>
            <person name="Jaffray E."/>
            <person name="Shen L.N."/>
            <person name="Vaughan O.A."/>
            <person name="Girwood D."/>
            <person name="Bartrons R."/>
            <person name="Rosa J.L."/>
            <person name="Hay R.T."/>
            <person name="Ventura F."/>
        </authorList>
    </citation>
    <scope>SUMOYLATION AT LYS-404 AND LYS-417</scope>
    <scope>MUTAGENESIS OF LYS-404 AND LYS-417</scope>
    <scope>SUBCELLULAR LOCATION</scope>
</reference>
<reference key="8">
    <citation type="journal article" date="2009" name="Anal. Chem.">
        <title>Lys-N and trypsin cover complementary parts of the phosphoproteome in a refined SCX-based approach.</title>
        <authorList>
            <person name="Gauci S."/>
            <person name="Helbig A.O."/>
            <person name="Slijper M."/>
            <person name="Krijgsveld J."/>
            <person name="Heck A.J."/>
            <person name="Mohammed S."/>
        </authorList>
    </citation>
    <scope>IDENTIFICATION BY MASS SPECTROMETRY [LARGE SCALE ANALYSIS]</scope>
</reference>
<reference key="9">
    <citation type="journal article" date="2013" name="J. Proteome Res.">
        <title>Toward a comprehensive characterization of a human cancer cell phosphoproteome.</title>
        <authorList>
            <person name="Zhou H."/>
            <person name="Di Palma S."/>
            <person name="Preisinger C."/>
            <person name="Peng M."/>
            <person name="Polat A.N."/>
            <person name="Heck A.J."/>
            <person name="Mohammed S."/>
        </authorList>
    </citation>
    <scope>PHOSPHORYLATION [LARGE SCALE ANALYSIS] AT THR-119; SER-399 AND SER-439</scope>
    <scope>IDENTIFICATION BY MASS SPECTROMETRY [LARGE SCALE ANALYSIS]</scope>
    <source>
        <tissue>Erythroleukemia</tissue>
    </source>
</reference>
<reference key="10">
    <citation type="journal article" date="2014" name="J. Proteomics">
        <title>An enzyme assisted RP-RPLC approach for in-depth analysis of human liver phosphoproteome.</title>
        <authorList>
            <person name="Bian Y."/>
            <person name="Song C."/>
            <person name="Cheng K."/>
            <person name="Dong M."/>
            <person name="Wang F."/>
            <person name="Huang J."/>
            <person name="Sun D."/>
            <person name="Wang L."/>
            <person name="Ye M."/>
            <person name="Zou H."/>
        </authorList>
    </citation>
    <scope>IDENTIFICATION BY MASS SPECTROMETRY [LARGE SCALE ANALYSIS]</scope>
    <source>
        <tissue>Liver</tissue>
    </source>
</reference>
<reference key="11">
    <citation type="journal article" date="2020" name="Am. J. Hum. Genet.">
        <title>De Novo SOX6 Variants Cause a Neurodevelopmental Syndrome Associated with ADHD, Craniosynostosis, and Osteochondromas.</title>
        <authorList>
            <consortium name="Genomics England Research Consortium"/>
            <person name="Tolchin D."/>
            <person name="Yeager J.P."/>
            <person name="Prasad P."/>
            <person name="Dorrani N."/>
            <person name="Russi A.S."/>
            <person name="Martinez-Agosto J.A."/>
            <person name="Haseeb A."/>
            <person name="Angelozzi M."/>
            <person name="Santen G.W.E."/>
            <person name="Ruivenkamp C."/>
            <person name="Mercimek-Andrews S."/>
            <person name="Depienne C."/>
            <person name="Kuechler A."/>
            <person name="Mikat B."/>
            <person name="Ludecke H.J."/>
            <person name="Bilan F."/>
            <person name="Le Guyader G."/>
            <person name="Gilbert-Dussardier B."/>
            <person name="Keren B."/>
            <person name="Heide S."/>
            <person name="Haye D."/>
            <person name="Van Esch H."/>
            <person name="Keldermans L."/>
            <person name="Ortiz D."/>
            <person name="Lancaster E."/>
            <person name="Krantz I.D."/>
            <person name="Krock B.L."/>
            <person name="Pechter K.B."/>
            <person name="Arkader A."/>
            <person name="Medne L."/>
            <person name="DeChene E.T."/>
            <person name="Calpena E."/>
            <person name="Melistaccio G."/>
            <person name="Wilkie A.O.M."/>
            <person name="Suri M."/>
            <person name="Foulds N."/>
            <person name="Begtrup A."/>
            <person name="Henderson L.B."/>
            <person name="Forster C."/>
            <person name="Reed P."/>
            <person name="McDonald M.T."/>
            <person name="McConkie-Rosell A."/>
            <person name="Thevenon J."/>
            <person name="Le Tanno P."/>
            <person name="Coutton C."/>
            <person name="Tsai A.C.H."/>
            <person name="Stewart S."/>
            <person name="Maver A."/>
            <person name="Gorazd R."/>
            <person name="Pichon O."/>
            <person name="Nizon M."/>
            <person name="Cogne B."/>
            <person name="Isidor B."/>
            <person name="Martin-Coignard D."/>
            <person name="Stoeva R."/>
            <person name="Lefebvre V."/>
            <person name="Le Caignec C."/>
        </authorList>
    </citation>
    <scope>INVOLVEMENT IN TOLCAS</scope>
    <scope>VARIANTS TOLCAS 81-SER--ASN-828 DEL; 93-ARG--ASN-828 DEL; 98-SER--ASN-828 DEL; CYS-161; 240-GLN--ASN-828 DEL; THR-625; ARG-659 AND LEU-766</scope>
    <scope>DEVELOPMENTAL STAGE</scope>
</reference>
<organism>
    <name type="scientific">Homo sapiens</name>
    <name type="common">Human</name>
    <dbReference type="NCBI Taxonomy" id="9606"/>
    <lineage>
        <taxon>Eukaryota</taxon>
        <taxon>Metazoa</taxon>
        <taxon>Chordata</taxon>
        <taxon>Craniata</taxon>
        <taxon>Vertebrata</taxon>
        <taxon>Euteleostomi</taxon>
        <taxon>Mammalia</taxon>
        <taxon>Eutheria</taxon>
        <taxon>Euarchontoglires</taxon>
        <taxon>Primates</taxon>
        <taxon>Haplorrhini</taxon>
        <taxon>Catarrhini</taxon>
        <taxon>Hominidae</taxon>
        <taxon>Homo</taxon>
    </lineage>
</organism>
<accession>P35712</accession>
<accession>Q86VX7</accession>
<accession>Q9BXQ3</accession>
<accession>Q9BXQ4</accession>
<accession>Q9BXQ5</accession>
<accession>Q9H0I8</accession>
<feature type="chain" id="PRO_0000048729" description="Transcription factor SOX-6">
    <location>
        <begin position="1"/>
        <end position="828"/>
    </location>
</feature>
<feature type="DNA-binding region" description="HMG box" evidence="3">
    <location>
        <begin position="621"/>
        <end position="689"/>
    </location>
</feature>
<feature type="region of interest" description="Disordered" evidence="4">
    <location>
        <begin position="1"/>
        <end position="51"/>
    </location>
</feature>
<feature type="region of interest" description="Disordered" evidence="4">
    <location>
        <begin position="380"/>
        <end position="470"/>
    </location>
</feature>
<feature type="region of interest" description="Disordered" evidence="4">
    <location>
        <begin position="753"/>
        <end position="828"/>
    </location>
</feature>
<feature type="coiled-coil region" evidence="2">
    <location>
        <begin position="184"/>
        <end position="262"/>
    </location>
</feature>
<feature type="compositionally biased region" description="Basic and acidic residues" evidence="4">
    <location>
        <begin position="25"/>
        <end position="34"/>
    </location>
</feature>
<feature type="compositionally biased region" description="Polar residues" evidence="4">
    <location>
        <begin position="393"/>
        <end position="402"/>
    </location>
</feature>
<feature type="compositionally biased region" description="Polar residues" evidence="4">
    <location>
        <begin position="439"/>
        <end position="461"/>
    </location>
</feature>
<feature type="compositionally biased region" description="Polar residues" evidence="4">
    <location>
        <begin position="753"/>
        <end position="781"/>
    </location>
</feature>
<feature type="compositionally biased region" description="Acidic residues" evidence="4">
    <location>
        <begin position="796"/>
        <end position="809"/>
    </location>
</feature>
<feature type="modified residue" description="Phosphothreonine" evidence="14">
    <location>
        <position position="119"/>
    </location>
</feature>
<feature type="modified residue" description="Phosphoserine" evidence="14">
    <location>
        <position position="399"/>
    </location>
</feature>
<feature type="modified residue" description="Phosphothreonine" evidence="1">
    <location>
        <position position="401"/>
    </location>
</feature>
<feature type="modified residue" description="Phosphoserine" evidence="14">
    <location>
        <position position="439"/>
    </location>
</feature>
<feature type="modified residue" description="Phosphoserine" evidence="1">
    <location>
        <position position="442"/>
    </location>
</feature>
<feature type="cross-link" description="Glycyl lysine isopeptide (Lys-Gly) (interchain with G-Cter in SUMO)">
    <location>
        <position position="404"/>
    </location>
</feature>
<feature type="cross-link" description="Glycyl lysine isopeptide (Lys-Gly) (interchain with G-Cter in SUMO)">
    <location>
        <position position="417"/>
    </location>
</feature>
<feature type="splice variant" id="VSP_039693" description="In isoform 2." evidence="8">
    <original>M</original>
    <variation>MGRM</variation>
    <location>
        <position position="1"/>
    </location>
</feature>
<feature type="splice variant" id="VSP_039694" description="In isoform 2 and isoform 4." evidence="8 10">
    <location>
        <begin position="327"/>
        <end position="367"/>
    </location>
</feature>
<feature type="splice variant" id="VSP_039695" description="In isoform 2 and isoform 4." evidence="8 10">
    <original>S</original>
    <variation>SLGKWKSQHQEETYE</variation>
    <location>
        <position position="477"/>
    </location>
</feature>
<feature type="splice variant" id="VSP_039696" description="In isoform 3." evidence="9">
    <location>
        <begin position="578"/>
        <end position="597"/>
    </location>
</feature>
<feature type="sequence variant" id="VAR_084739" description="In TOLCAS." evidence="7">
    <location>
        <begin position="81"/>
        <end position="828"/>
    </location>
</feature>
<feature type="sequence variant" id="VAR_084740" description="In TOLCAS." evidence="7">
    <location>
        <begin position="93"/>
        <end position="828"/>
    </location>
</feature>
<feature type="sequence variant" id="VAR_084741" description="In TOLCAS." evidence="7">
    <location>
        <begin position="98"/>
        <end position="828"/>
    </location>
</feature>
<feature type="sequence variant" id="VAR_084742" description="In TOLCAS; uncertain significance." evidence="7">
    <original>W</original>
    <variation>C</variation>
    <location>
        <position position="161"/>
    </location>
</feature>
<feature type="sequence variant" id="VAR_084743" description="In TOLCAS." evidence="7">
    <location>
        <begin position="240"/>
        <end position="828"/>
    </location>
</feature>
<feature type="sequence variant" id="VAR_084744" description="In TOLCAS; uncertain significance." evidence="7">
    <original>M</original>
    <variation>T</variation>
    <location>
        <position position="625"/>
    </location>
</feature>
<feature type="sequence variant" id="VAR_084745" description="In TOLCAS; uncertain significance." evidence="7">
    <original>W</original>
    <variation>R</variation>
    <location>
        <position position="659"/>
    </location>
</feature>
<feature type="sequence variant" id="VAR_084746" description="In TOLCAS; uncertain significance." evidence="7">
    <original>S</original>
    <variation>L</variation>
    <location>
        <position position="766"/>
    </location>
</feature>
<feature type="mutagenesis site" description="Partial loss of sumoylation. Complete loss of sumoylation; when associated with R-417." evidence="6">
    <original>K</original>
    <variation>R</variation>
    <location>
        <position position="404"/>
    </location>
</feature>
<feature type="mutagenesis site" description="Partial loss of sumoylation. Complete loss of sumoylation; when associated with R-404." evidence="6">
    <original>K</original>
    <variation>R</variation>
    <location>
        <position position="417"/>
    </location>
</feature>
<feature type="sequence conflict" description="In Ref. 1; AAK26115." evidence="11" ref="1">
    <original>V</original>
    <variation>A</variation>
    <location>
        <position position="330"/>
    </location>
</feature>
<feature type="sequence conflict" description="In Ref. 6; CAA46614." evidence="11" ref="6">
    <original>K</original>
    <variation>R</variation>
    <location>
        <position position="633"/>
    </location>
</feature>
<keyword id="KW-0010">Activator</keyword>
<keyword id="KW-0025">Alternative splicing</keyword>
<keyword id="KW-1268">Autism spectrum disorder</keyword>
<keyword id="KW-0175">Coiled coil</keyword>
<keyword id="KW-0963">Cytoplasm</keyword>
<keyword id="KW-0217">Developmental protein</keyword>
<keyword id="KW-0221">Differentiation</keyword>
<keyword id="KW-0225">Disease variant</keyword>
<keyword id="KW-0238">DNA-binding</keyword>
<keyword id="KW-0991">Intellectual disability</keyword>
<keyword id="KW-1017">Isopeptide bond</keyword>
<keyword id="KW-0539">Nucleus</keyword>
<keyword id="KW-0597">Phosphoprotein</keyword>
<keyword id="KW-1267">Proteomics identification</keyword>
<keyword id="KW-1185">Reference proteome</keyword>
<keyword id="KW-0678">Repressor</keyword>
<keyword id="KW-0804">Transcription</keyword>
<keyword id="KW-0805">Transcription regulation</keyword>
<keyword id="KW-0832">Ubl conjugation</keyword>
<gene>
    <name evidence="9 13" type="primary">SOX6</name>
</gene>